<organism>
    <name type="scientific">Thermoanaerobacter pseudethanolicus (strain ATCC 33223 / 39E)</name>
    <name type="common">Clostridium thermohydrosulfuricum</name>
    <dbReference type="NCBI Taxonomy" id="340099"/>
    <lineage>
        <taxon>Bacteria</taxon>
        <taxon>Bacillati</taxon>
        <taxon>Bacillota</taxon>
        <taxon>Clostridia</taxon>
        <taxon>Thermoanaerobacterales</taxon>
        <taxon>Thermoanaerobacteraceae</taxon>
        <taxon>Thermoanaerobacter</taxon>
    </lineage>
</organism>
<feature type="chain" id="PRO_1000114460" description="Small ribosomal subunit protein bS18">
    <location>
        <begin position="1"/>
        <end position="88"/>
    </location>
</feature>
<feature type="region of interest" description="Disordered" evidence="2">
    <location>
        <begin position="1"/>
        <end position="21"/>
    </location>
</feature>
<feature type="compositionally biased region" description="Low complexity" evidence="2">
    <location>
        <begin position="1"/>
        <end position="11"/>
    </location>
</feature>
<keyword id="KW-1185">Reference proteome</keyword>
<keyword id="KW-0687">Ribonucleoprotein</keyword>
<keyword id="KW-0689">Ribosomal protein</keyword>
<keyword id="KW-0694">RNA-binding</keyword>
<keyword id="KW-0699">rRNA-binding</keyword>
<sequence length="88" mass="10133">MTTANTTAKDNAATKKRGRKAKKRVCAFCTDNIDKIDYKDVARLRKYITERGKILPRRITGNCARHQRQLTKAIKRARQIALLPYTVE</sequence>
<dbReference type="EMBL" id="CP000924">
    <property type="protein sequence ID" value="ABY95894.1"/>
    <property type="molecule type" value="Genomic_DNA"/>
</dbReference>
<dbReference type="RefSeq" id="WP_003867432.1">
    <property type="nucleotide sequence ID" value="NC_010321.1"/>
</dbReference>
<dbReference type="SMR" id="B0K8G2"/>
<dbReference type="STRING" id="340099.Teth39_2273"/>
<dbReference type="KEGG" id="tpd:Teth39_2273"/>
<dbReference type="eggNOG" id="COG0238">
    <property type="taxonomic scope" value="Bacteria"/>
</dbReference>
<dbReference type="HOGENOM" id="CLU_148710_2_2_9"/>
<dbReference type="Proteomes" id="UP000002156">
    <property type="component" value="Chromosome"/>
</dbReference>
<dbReference type="GO" id="GO:0022627">
    <property type="term" value="C:cytosolic small ribosomal subunit"/>
    <property type="evidence" value="ECO:0007669"/>
    <property type="project" value="TreeGrafter"/>
</dbReference>
<dbReference type="GO" id="GO:0070181">
    <property type="term" value="F:small ribosomal subunit rRNA binding"/>
    <property type="evidence" value="ECO:0007669"/>
    <property type="project" value="TreeGrafter"/>
</dbReference>
<dbReference type="GO" id="GO:0003735">
    <property type="term" value="F:structural constituent of ribosome"/>
    <property type="evidence" value="ECO:0007669"/>
    <property type="project" value="InterPro"/>
</dbReference>
<dbReference type="GO" id="GO:0006412">
    <property type="term" value="P:translation"/>
    <property type="evidence" value="ECO:0007669"/>
    <property type="project" value="UniProtKB-UniRule"/>
</dbReference>
<dbReference type="FunFam" id="4.10.640.10:FF:000004">
    <property type="entry name" value="30S ribosomal protein S18"/>
    <property type="match status" value="1"/>
</dbReference>
<dbReference type="Gene3D" id="4.10.640.10">
    <property type="entry name" value="Ribosomal protein S18"/>
    <property type="match status" value="1"/>
</dbReference>
<dbReference type="HAMAP" id="MF_00270">
    <property type="entry name" value="Ribosomal_bS18"/>
    <property type="match status" value="1"/>
</dbReference>
<dbReference type="InterPro" id="IPR001648">
    <property type="entry name" value="Ribosomal_bS18"/>
</dbReference>
<dbReference type="InterPro" id="IPR018275">
    <property type="entry name" value="Ribosomal_bS18_CS"/>
</dbReference>
<dbReference type="InterPro" id="IPR036870">
    <property type="entry name" value="Ribosomal_bS18_sf"/>
</dbReference>
<dbReference type="NCBIfam" id="TIGR00165">
    <property type="entry name" value="S18"/>
    <property type="match status" value="1"/>
</dbReference>
<dbReference type="PANTHER" id="PTHR13479">
    <property type="entry name" value="30S RIBOSOMAL PROTEIN S18"/>
    <property type="match status" value="1"/>
</dbReference>
<dbReference type="PANTHER" id="PTHR13479:SF40">
    <property type="entry name" value="SMALL RIBOSOMAL SUBUNIT PROTEIN BS18M"/>
    <property type="match status" value="1"/>
</dbReference>
<dbReference type="Pfam" id="PF01084">
    <property type="entry name" value="Ribosomal_S18"/>
    <property type="match status" value="1"/>
</dbReference>
<dbReference type="PRINTS" id="PR00974">
    <property type="entry name" value="RIBOSOMALS18"/>
</dbReference>
<dbReference type="SUPFAM" id="SSF46911">
    <property type="entry name" value="Ribosomal protein S18"/>
    <property type="match status" value="1"/>
</dbReference>
<dbReference type="PROSITE" id="PS00057">
    <property type="entry name" value="RIBOSOMAL_S18"/>
    <property type="match status" value="1"/>
</dbReference>
<name>RS18_THEP3</name>
<proteinExistence type="inferred from homology"/>
<evidence type="ECO:0000255" key="1">
    <source>
        <dbReference type="HAMAP-Rule" id="MF_00270"/>
    </source>
</evidence>
<evidence type="ECO:0000256" key="2">
    <source>
        <dbReference type="SAM" id="MobiDB-lite"/>
    </source>
</evidence>
<evidence type="ECO:0000305" key="3"/>
<protein>
    <recommendedName>
        <fullName evidence="1">Small ribosomal subunit protein bS18</fullName>
    </recommendedName>
    <alternativeName>
        <fullName evidence="3">30S ribosomal protein S18</fullName>
    </alternativeName>
</protein>
<reference key="1">
    <citation type="submission" date="2008-01" db="EMBL/GenBank/DDBJ databases">
        <title>Complete sequence of Thermoanaerobacter pseudethanolicus 39E.</title>
        <authorList>
            <person name="Copeland A."/>
            <person name="Lucas S."/>
            <person name="Lapidus A."/>
            <person name="Barry K."/>
            <person name="Glavina del Rio T."/>
            <person name="Dalin E."/>
            <person name="Tice H."/>
            <person name="Pitluck S."/>
            <person name="Bruce D."/>
            <person name="Goodwin L."/>
            <person name="Saunders E."/>
            <person name="Brettin T."/>
            <person name="Detter J.C."/>
            <person name="Han C."/>
            <person name="Schmutz J."/>
            <person name="Larimer F."/>
            <person name="Land M."/>
            <person name="Hauser L."/>
            <person name="Kyrpides N."/>
            <person name="Lykidis A."/>
            <person name="Hemme C."/>
            <person name="Fields M.W."/>
            <person name="He Z."/>
            <person name="Zhou J."/>
            <person name="Richardson P."/>
        </authorList>
    </citation>
    <scope>NUCLEOTIDE SEQUENCE [LARGE SCALE GENOMIC DNA]</scope>
    <source>
        <strain>ATCC 33223 / DSM 2355 / 39E</strain>
    </source>
</reference>
<comment type="function">
    <text evidence="1">Binds as a heterodimer with protein bS6 to the central domain of the 16S rRNA, where it helps stabilize the platform of the 30S subunit.</text>
</comment>
<comment type="subunit">
    <text evidence="1">Part of the 30S ribosomal subunit. Forms a tight heterodimer with protein bS6.</text>
</comment>
<comment type="similarity">
    <text evidence="1">Belongs to the bacterial ribosomal protein bS18 family.</text>
</comment>
<gene>
    <name evidence="1" type="primary">rpsR</name>
    <name type="ordered locus">Teth39_2273</name>
</gene>
<accession>B0K8G2</accession>